<sequence>MSTVGELACSYAVMILEDEGIAITADKIATLVKAAGVSIESYWPMLFAKMAEKRNVTDLIMNVGAGGGGGAPVAAAAPAAGGGAAAAPAAEEKKKDEPAEESDGDLGFGLFD</sequence>
<proteinExistence type="inferred from homology"/>
<dbReference type="EMBL" id="AC007323">
    <property type="protein sequence ID" value="AAF26471.1"/>
    <property type="molecule type" value="Genomic_DNA"/>
</dbReference>
<dbReference type="EMBL" id="CP002684">
    <property type="protein sequence ID" value="AEE27234.1"/>
    <property type="molecule type" value="Genomic_DNA"/>
</dbReference>
<dbReference type="EMBL" id="CP002684">
    <property type="protein sequence ID" value="AEE27235.1"/>
    <property type="molecule type" value="Genomic_DNA"/>
</dbReference>
<dbReference type="EMBL" id="CP002684">
    <property type="protein sequence ID" value="AEE27237.1"/>
    <property type="molecule type" value="Genomic_DNA"/>
</dbReference>
<dbReference type="EMBL" id="AY050975">
    <property type="protein sequence ID" value="AAK93652.1"/>
    <property type="molecule type" value="mRNA"/>
</dbReference>
<dbReference type="EMBL" id="AY091176">
    <property type="protein sequence ID" value="AAM14115.1"/>
    <property type="molecule type" value="mRNA"/>
</dbReference>
<dbReference type="EMBL" id="AY086359">
    <property type="protein sequence ID" value="AAM64427.1"/>
    <property type="molecule type" value="mRNA"/>
</dbReference>
<dbReference type="PIR" id="E86141">
    <property type="entry name" value="E86141"/>
</dbReference>
<dbReference type="RefSeq" id="NP_001077439.1">
    <molecule id="Q8LCW9-1"/>
    <property type="nucleotide sequence ID" value="NM_001083970.1"/>
</dbReference>
<dbReference type="RefSeq" id="NP_171618.1">
    <molecule id="Q8LCW9-1"/>
    <property type="nucleotide sequence ID" value="NM_099992.3"/>
</dbReference>
<dbReference type="RefSeq" id="NP_849569.1">
    <molecule id="Q8LCW9-1"/>
    <property type="nucleotide sequence ID" value="NM_179238.4"/>
</dbReference>
<dbReference type="SMR" id="Q8LCW9"/>
<dbReference type="BioGRID" id="24645">
    <property type="interactions" value="6"/>
</dbReference>
<dbReference type="FunCoup" id="Q8LCW9">
    <property type="interactions" value="1022"/>
</dbReference>
<dbReference type="IntAct" id="Q8LCW9">
    <property type="interactions" value="2"/>
</dbReference>
<dbReference type="STRING" id="3702.Q8LCW9"/>
<dbReference type="GlyGen" id="Q8LCW9">
    <property type="glycosylation" value="1 site, 1 O-linked glycan (1 site)"/>
</dbReference>
<dbReference type="iPTMnet" id="Q8LCW9"/>
<dbReference type="PaxDb" id="3702-AT1G01100.2"/>
<dbReference type="ProteomicsDB" id="228093">
    <molecule id="Q8LCW9-1"/>
</dbReference>
<dbReference type="EnsemblPlants" id="AT1G01100.1">
    <molecule id="Q8LCW9-1"/>
    <property type="protein sequence ID" value="AT1G01100.1"/>
    <property type="gene ID" value="AT1G01100"/>
</dbReference>
<dbReference type="EnsemblPlants" id="AT1G01100.2">
    <molecule id="Q8LCW9-1"/>
    <property type="protein sequence ID" value="AT1G01100.2"/>
    <property type="gene ID" value="AT1G01100"/>
</dbReference>
<dbReference type="EnsemblPlants" id="AT1G01100.4">
    <molecule id="Q8LCW9-1"/>
    <property type="protein sequence ID" value="AT1G01100.4"/>
    <property type="gene ID" value="AT1G01100"/>
</dbReference>
<dbReference type="GeneID" id="839410"/>
<dbReference type="Gramene" id="AT1G01100.1">
    <molecule id="Q8LCW9-1"/>
    <property type="protein sequence ID" value="AT1G01100.1"/>
    <property type="gene ID" value="AT1G01100"/>
</dbReference>
<dbReference type="Gramene" id="AT1G01100.2">
    <molecule id="Q8LCW9-1"/>
    <property type="protein sequence ID" value="AT1G01100.2"/>
    <property type="gene ID" value="AT1G01100"/>
</dbReference>
<dbReference type="Gramene" id="AT1G01100.4">
    <molecule id="Q8LCW9-1"/>
    <property type="protein sequence ID" value="AT1G01100.4"/>
    <property type="gene ID" value="AT1G01100"/>
</dbReference>
<dbReference type="KEGG" id="ath:AT1G01100"/>
<dbReference type="Araport" id="AT1G01100"/>
<dbReference type="TAIR" id="AT1G01100">
    <property type="gene designation" value="RPP1A"/>
</dbReference>
<dbReference type="eggNOG" id="KOG1762">
    <property type="taxonomic scope" value="Eukaryota"/>
</dbReference>
<dbReference type="HOGENOM" id="CLU_114656_1_0_1"/>
<dbReference type="InParanoid" id="Q8LCW9"/>
<dbReference type="OMA" id="IEPYWPM"/>
<dbReference type="OrthoDB" id="1110178at2759"/>
<dbReference type="PhylomeDB" id="Q8LCW9"/>
<dbReference type="CD-CODE" id="4299E36E">
    <property type="entry name" value="Nucleolus"/>
</dbReference>
<dbReference type="PRO" id="PR:Q8LCW9"/>
<dbReference type="Proteomes" id="UP000006548">
    <property type="component" value="Chromosome 1"/>
</dbReference>
<dbReference type="ExpressionAtlas" id="Q8LCW9">
    <property type="expression patterns" value="baseline and differential"/>
</dbReference>
<dbReference type="GO" id="GO:0005829">
    <property type="term" value="C:cytosol"/>
    <property type="evidence" value="ECO:0007005"/>
    <property type="project" value="TAIR"/>
</dbReference>
<dbReference type="GO" id="GO:0022626">
    <property type="term" value="C:cytosolic ribosome"/>
    <property type="evidence" value="ECO:0007005"/>
    <property type="project" value="TAIR"/>
</dbReference>
<dbReference type="GO" id="GO:1990904">
    <property type="term" value="C:ribonucleoprotein complex"/>
    <property type="evidence" value="ECO:0007669"/>
    <property type="project" value="UniProtKB-KW"/>
</dbReference>
<dbReference type="GO" id="GO:0003735">
    <property type="term" value="F:structural constituent of ribosome"/>
    <property type="evidence" value="ECO:0000314"/>
    <property type="project" value="CAFA"/>
</dbReference>
<dbReference type="GO" id="GO:0006414">
    <property type="term" value="P:translational elongation"/>
    <property type="evidence" value="ECO:0007669"/>
    <property type="project" value="InterPro"/>
</dbReference>
<dbReference type="CDD" id="cd05831">
    <property type="entry name" value="Ribosomal_P1"/>
    <property type="match status" value="1"/>
</dbReference>
<dbReference type="FunFam" id="1.10.10.1410:FF:000001">
    <property type="entry name" value="60S acidic ribosomal protein P1"/>
    <property type="match status" value="1"/>
</dbReference>
<dbReference type="Gene3D" id="1.10.10.1410">
    <property type="match status" value="1"/>
</dbReference>
<dbReference type="HAMAP" id="MF_01478">
    <property type="entry name" value="Ribosomal_L12_arch"/>
    <property type="match status" value="1"/>
</dbReference>
<dbReference type="InterPro" id="IPR038716">
    <property type="entry name" value="P1/P2_N_sf"/>
</dbReference>
<dbReference type="InterPro" id="IPR027534">
    <property type="entry name" value="Ribosomal_P1/P2"/>
</dbReference>
<dbReference type="PANTHER" id="PTHR45696">
    <property type="entry name" value="60S ACIDIC RIBOSOMAL PROTEIN P1"/>
    <property type="match status" value="1"/>
</dbReference>
<dbReference type="PANTHER" id="PTHR45696:SF42">
    <property type="entry name" value="LARGE RIBOSOMAL SUBUNIT PROTEIN P1W-RELATED"/>
    <property type="match status" value="1"/>
</dbReference>
<dbReference type="Pfam" id="PF00428">
    <property type="entry name" value="Ribosomal_60s"/>
    <property type="match status" value="1"/>
</dbReference>
<protein>
    <recommendedName>
        <fullName evidence="4">Large ribosomal subunit protein P1w</fullName>
    </recommendedName>
    <alternativeName>
        <fullName>60S acidic ribosomal protein P1-1</fullName>
    </alternativeName>
</protein>
<evidence type="ECO:0000250" key="1"/>
<evidence type="ECO:0000250" key="2">
    <source>
        <dbReference type="UniProtKB" id="O23095"/>
    </source>
</evidence>
<evidence type="ECO:0000256" key="3">
    <source>
        <dbReference type="SAM" id="MobiDB-lite"/>
    </source>
</evidence>
<evidence type="ECO:0000303" key="4">
    <source>
    </source>
</evidence>
<evidence type="ECO:0000305" key="5"/>
<feature type="chain" id="PRO_0000245781" description="Large ribosomal subunit protein P1w">
    <location>
        <begin position="1"/>
        <end position="112"/>
    </location>
</feature>
<feature type="region of interest" description="Disordered" evidence="3">
    <location>
        <begin position="85"/>
        <end position="112"/>
    </location>
</feature>
<feature type="modified residue" description="Phosphoserine" evidence="2">
    <location>
        <position position="102"/>
    </location>
</feature>
<feature type="sequence conflict" description="In Ref. 4; AAM64427." evidence="5" ref="4">
    <original>G</original>
    <variation>S</variation>
    <location>
        <position position="70"/>
    </location>
</feature>
<organism>
    <name type="scientific">Arabidopsis thaliana</name>
    <name type="common">Mouse-ear cress</name>
    <dbReference type="NCBI Taxonomy" id="3702"/>
    <lineage>
        <taxon>Eukaryota</taxon>
        <taxon>Viridiplantae</taxon>
        <taxon>Streptophyta</taxon>
        <taxon>Embryophyta</taxon>
        <taxon>Tracheophyta</taxon>
        <taxon>Spermatophyta</taxon>
        <taxon>Magnoliopsida</taxon>
        <taxon>eudicotyledons</taxon>
        <taxon>Gunneridae</taxon>
        <taxon>Pentapetalae</taxon>
        <taxon>rosids</taxon>
        <taxon>malvids</taxon>
        <taxon>Brassicales</taxon>
        <taxon>Brassicaceae</taxon>
        <taxon>Camelineae</taxon>
        <taxon>Arabidopsis</taxon>
    </lineage>
</organism>
<reference key="1">
    <citation type="journal article" date="2000" name="Nature">
        <title>Sequence and analysis of chromosome 1 of the plant Arabidopsis thaliana.</title>
        <authorList>
            <person name="Theologis A."/>
            <person name="Ecker J.R."/>
            <person name="Palm C.J."/>
            <person name="Federspiel N.A."/>
            <person name="Kaul S."/>
            <person name="White O."/>
            <person name="Alonso J."/>
            <person name="Altafi H."/>
            <person name="Araujo R."/>
            <person name="Bowman C.L."/>
            <person name="Brooks S.Y."/>
            <person name="Buehler E."/>
            <person name="Chan A."/>
            <person name="Chao Q."/>
            <person name="Chen H."/>
            <person name="Cheuk R.F."/>
            <person name="Chin C.W."/>
            <person name="Chung M.K."/>
            <person name="Conn L."/>
            <person name="Conway A.B."/>
            <person name="Conway A.R."/>
            <person name="Creasy T.H."/>
            <person name="Dewar K."/>
            <person name="Dunn P."/>
            <person name="Etgu P."/>
            <person name="Feldblyum T.V."/>
            <person name="Feng J.-D."/>
            <person name="Fong B."/>
            <person name="Fujii C.Y."/>
            <person name="Gill J.E."/>
            <person name="Goldsmith A.D."/>
            <person name="Haas B."/>
            <person name="Hansen N.F."/>
            <person name="Hughes B."/>
            <person name="Huizar L."/>
            <person name="Hunter J.L."/>
            <person name="Jenkins J."/>
            <person name="Johnson-Hopson C."/>
            <person name="Khan S."/>
            <person name="Khaykin E."/>
            <person name="Kim C.J."/>
            <person name="Koo H.L."/>
            <person name="Kremenetskaia I."/>
            <person name="Kurtz D.B."/>
            <person name="Kwan A."/>
            <person name="Lam B."/>
            <person name="Langin-Hooper S."/>
            <person name="Lee A."/>
            <person name="Lee J.M."/>
            <person name="Lenz C.A."/>
            <person name="Li J.H."/>
            <person name="Li Y.-P."/>
            <person name="Lin X."/>
            <person name="Liu S.X."/>
            <person name="Liu Z.A."/>
            <person name="Luros J.S."/>
            <person name="Maiti R."/>
            <person name="Marziali A."/>
            <person name="Militscher J."/>
            <person name="Miranda M."/>
            <person name="Nguyen M."/>
            <person name="Nierman W.C."/>
            <person name="Osborne B.I."/>
            <person name="Pai G."/>
            <person name="Peterson J."/>
            <person name="Pham P.K."/>
            <person name="Rizzo M."/>
            <person name="Rooney T."/>
            <person name="Rowley D."/>
            <person name="Sakano H."/>
            <person name="Salzberg S.L."/>
            <person name="Schwartz J.R."/>
            <person name="Shinn P."/>
            <person name="Southwick A.M."/>
            <person name="Sun H."/>
            <person name="Tallon L.J."/>
            <person name="Tambunga G."/>
            <person name="Toriumi M.J."/>
            <person name="Town C.D."/>
            <person name="Utterback T."/>
            <person name="Van Aken S."/>
            <person name="Vaysberg M."/>
            <person name="Vysotskaia V.S."/>
            <person name="Walker M."/>
            <person name="Wu D."/>
            <person name="Yu G."/>
            <person name="Fraser C.M."/>
            <person name="Venter J.C."/>
            <person name="Davis R.W."/>
        </authorList>
    </citation>
    <scope>NUCLEOTIDE SEQUENCE [LARGE SCALE GENOMIC DNA]</scope>
    <source>
        <strain>cv. Columbia</strain>
    </source>
</reference>
<reference key="2">
    <citation type="journal article" date="2017" name="Plant J.">
        <title>Araport11: a complete reannotation of the Arabidopsis thaliana reference genome.</title>
        <authorList>
            <person name="Cheng C.Y."/>
            <person name="Krishnakumar V."/>
            <person name="Chan A.P."/>
            <person name="Thibaud-Nissen F."/>
            <person name="Schobel S."/>
            <person name="Town C.D."/>
        </authorList>
    </citation>
    <scope>GENOME REANNOTATION</scope>
    <source>
        <strain>cv. Columbia</strain>
    </source>
</reference>
<reference key="3">
    <citation type="journal article" date="2003" name="Science">
        <title>Empirical analysis of transcriptional activity in the Arabidopsis genome.</title>
        <authorList>
            <person name="Yamada K."/>
            <person name="Lim J."/>
            <person name="Dale J.M."/>
            <person name="Chen H."/>
            <person name="Shinn P."/>
            <person name="Palm C.J."/>
            <person name="Southwick A.M."/>
            <person name="Wu H.C."/>
            <person name="Kim C.J."/>
            <person name="Nguyen M."/>
            <person name="Pham P.K."/>
            <person name="Cheuk R.F."/>
            <person name="Karlin-Newmann G."/>
            <person name="Liu S.X."/>
            <person name="Lam B."/>
            <person name="Sakano H."/>
            <person name="Wu T."/>
            <person name="Yu G."/>
            <person name="Miranda M."/>
            <person name="Quach H.L."/>
            <person name="Tripp M."/>
            <person name="Chang C.H."/>
            <person name="Lee J.M."/>
            <person name="Toriumi M.J."/>
            <person name="Chan M.M."/>
            <person name="Tang C.C."/>
            <person name="Onodera C.S."/>
            <person name="Deng J.M."/>
            <person name="Akiyama K."/>
            <person name="Ansari Y."/>
            <person name="Arakawa T."/>
            <person name="Banh J."/>
            <person name="Banno F."/>
            <person name="Bowser L."/>
            <person name="Brooks S.Y."/>
            <person name="Carninci P."/>
            <person name="Chao Q."/>
            <person name="Choy N."/>
            <person name="Enju A."/>
            <person name="Goldsmith A.D."/>
            <person name="Gurjal M."/>
            <person name="Hansen N.F."/>
            <person name="Hayashizaki Y."/>
            <person name="Johnson-Hopson C."/>
            <person name="Hsuan V.W."/>
            <person name="Iida K."/>
            <person name="Karnes M."/>
            <person name="Khan S."/>
            <person name="Koesema E."/>
            <person name="Ishida J."/>
            <person name="Jiang P.X."/>
            <person name="Jones T."/>
            <person name="Kawai J."/>
            <person name="Kamiya A."/>
            <person name="Meyers C."/>
            <person name="Nakajima M."/>
            <person name="Narusaka M."/>
            <person name="Seki M."/>
            <person name="Sakurai T."/>
            <person name="Satou M."/>
            <person name="Tamse R."/>
            <person name="Vaysberg M."/>
            <person name="Wallender E.K."/>
            <person name="Wong C."/>
            <person name="Yamamura Y."/>
            <person name="Yuan S."/>
            <person name="Shinozaki K."/>
            <person name="Davis R.W."/>
            <person name="Theologis A."/>
            <person name="Ecker J.R."/>
        </authorList>
    </citation>
    <scope>NUCLEOTIDE SEQUENCE [LARGE SCALE MRNA]</scope>
    <source>
        <strain>cv. Columbia</strain>
    </source>
</reference>
<reference key="4">
    <citation type="submission" date="2002-03" db="EMBL/GenBank/DDBJ databases">
        <title>Full-length cDNA from Arabidopsis thaliana.</title>
        <authorList>
            <person name="Brover V.V."/>
            <person name="Troukhan M.E."/>
            <person name="Alexandrov N.A."/>
            <person name="Lu Y.-P."/>
            <person name="Flavell R.B."/>
            <person name="Feldmann K.A."/>
        </authorList>
    </citation>
    <scope>NUCLEOTIDE SEQUENCE [LARGE SCALE MRNA]</scope>
</reference>
<reference key="5">
    <citation type="journal article" date="2001" name="Plant Physiol.">
        <title>The organization of cytoplasmic ribosomal protein genes in the Arabidopsis genome.</title>
        <authorList>
            <person name="Barakat A."/>
            <person name="Szick-Miranda K."/>
            <person name="Chang I.-F."/>
            <person name="Guyot R."/>
            <person name="Blanc G."/>
            <person name="Cooke R."/>
            <person name="Delseny M."/>
            <person name="Bailey-Serres J."/>
        </authorList>
    </citation>
    <scope>GENE FAMILY ORGANIZATION</scope>
    <scope>NOMENCLATURE</scope>
</reference>
<reference key="6">
    <citation type="journal article" date="2023" name="Plant Cell">
        <title>An updated nomenclature for plant ribosomal protein genes.</title>
        <authorList>
            <person name="Scarpin M.R."/>
            <person name="Busche M."/>
            <person name="Martinez R.E."/>
            <person name="Harper L.C."/>
            <person name="Reiser L."/>
            <person name="Szakonyi D."/>
            <person name="Merchante C."/>
            <person name="Lan T."/>
            <person name="Xiong W."/>
            <person name="Mo B."/>
            <person name="Tang G."/>
            <person name="Chen X."/>
            <person name="Bailey-Serres J."/>
            <person name="Browning K.S."/>
            <person name="Brunkard J.O."/>
        </authorList>
    </citation>
    <scope>NOMENCLATURE</scope>
</reference>
<keyword id="KW-0025">Alternative splicing</keyword>
<keyword id="KW-0597">Phosphoprotein</keyword>
<keyword id="KW-1185">Reference proteome</keyword>
<keyword id="KW-0687">Ribonucleoprotein</keyword>
<keyword id="KW-0689">Ribosomal protein</keyword>
<accession>Q8LCW9</accession>
<accession>Q9MAM5</accession>
<name>RLA11_ARATH</name>
<comment type="function">
    <text evidence="1">Plays an important role in the elongation step of protein synthesis.</text>
</comment>
<comment type="subunit">
    <text evidence="1">P1 and P2 exist as dimers at the large ribosomal subunit.</text>
</comment>
<comment type="alternative products">
    <event type="alternative splicing"/>
    <isoform>
        <id>Q8LCW9-1</id>
        <name>1</name>
        <sequence type="displayed"/>
    </isoform>
    <text>A number of isoforms are produced. According to EST sequences.</text>
</comment>
<comment type="similarity">
    <text evidence="5">Belongs to the eukaryotic ribosomal protein P1/P2 family.</text>
</comment>
<gene>
    <name type="primary">RPP1A</name>
    <name type="ordered locus">At1g01100</name>
    <name type="ORF">T25K16.9</name>
</gene>